<name>GGGPS_PYRFU</name>
<evidence type="ECO:0000255" key="1">
    <source>
        <dbReference type="HAMAP-Rule" id="MF_00112"/>
    </source>
</evidence>
<evidence type="ECO:0000305" key="2"/>
<organism>
    <name type="scientific">Pyrococcus furiosus (strain ATCC 43587 / DSM 3638 / JCM 8422 / Vc1)</name>
    <dbReference type="NCBI Taxonomy" id="186497"/>
    <lineage>
        <taxon>Archaea</taxon>
        <taxon>Methanobacteriati</taxon>
        <taxon>Methanobacteriota</taxon>
        <taxon>Thermococci</taxon>
        <taxon>Thermococcales</taxon>
        <taxon>Thermococcaceae</taxon>
        <taxon>Pyrococcus</taxon>
    </lineage>
</organism>
<protein>
    <recommendedName>
        <fullName evidence="1">Geranylgeranylglyceryl phosphate synthase</fullName>
        <shortName evidence="1">GGGP synthase</shortName>
        <shortName evidence="1">GGGPS</shortName>
        <ecNumber evidence="1">2.5.1.41</ecNumber>
    </recommendedName>
    <alternativeName>
        <fullName evidence="1">(S)-3-O-geranylgeranylglyceryl phosphate synthase</fullName>
    </alternativeName>
    <alternativeName>
        <fullName evidence="1">Phosphoglycerol geranylgeranyltransferase</fullName>
    </alternativeName>
</protein>
<dbReference type="EC" id="2.5.1.41" evidence="1"/>
<dbReference type="EMBL" id="AE009950">
    <property type="protein sequence ID" value="AAL81163.1"/>
    <property type="status" value="ALT_INIT"/>
    <property type="molecule type" value="Genomic_DNA"/>
</dbReference>
<dbReference type="SMR" id="Q8U213"/>
<dbReference type="STRING" id="186497.PF1039"/>
<dbReference type="PaxDb" id="186497-PF1039"/>
<dbReference type="KEGG" id="pfu:PF1039"/>
<dbReference type="PATRIC" id="fig|186497.12.peg.1100"/>
<dbReference type="eggNOG" id="arCOG01085">
    <property type="taxonomic scope" value="Archaea"/>
</dbReference>
<dbReference type="HOGENOM" id="CLU_068610_0_0_2"/>
<dbReference type="PhylomeDB" id="Q8U213"/>
<dbReference type="UniPathway" id="UPA00940"/>
<dbReference type="Proteomes" id="UP000001013">
    <property type="component" value="Chromosome"/>
</dbReference>
<dbReference type="GO" id="GO:0005737">
    <property type="term" value="C:cytoplasm"/>
    <property type="evidence" value="ECO:0007669"/>
    <property type="project" value="UniProtKB-SubCell"/>
</dbReference>
<dbReference type="GO" id="GO:0000107">
    <property type="term" value="F:imidazoleglycerol-phosphate synthase activity"/>
    <property type="evidence" value="ECO:0007669"/>
    <property type="project" value="TreeGrafter"/>
</dbReference>
<dbReference type="GO" id="GO:0000287">
    <property type="term" value="F:magnesium ion binding"/>
    <property type="evidence" value="ECO:0007669"/>
    <property type="project" value="UniProtKB-UniRule"/>
</dbReference>
<dbReference type="GO" id="GO:0047294">
    <property type="term" value="F:phosphoglycerol geranylgeranyltransferase activity"/>
    <property type="evidence" value="ECO:0007669"/>
    <property type="project" value="UniProtKB-UniRule"/>
</dbReference>
<dbReference type="GO" id="GO:0046474">
    <property type="term" value="P:glycerophospholipid biosynthetic process"/>
    <property type="evidence" value="ECO:0007669"/>
    <property type="project" value="UniProtKB-UniRule"/>
</dbReference>
<dbReference type="CDD" id="cd02812">
    <property type="entry name" value="PcrB_like"/>
    <property type="match status" value="1"/>
</dbReference>
<dbReference type="FunFam" id="3.20.20.390:FF:000001">
    <property type="entry name" value="Heptaprenylglyceryl phosphate synthase"/>
    <property type="match status" value="1"/>
</dbReference>
<dbReference type="Gene3D" id="3.20.20.390">
    <property type="entry name" value="FMN-linked oxidoreductases"/>
    <property type="match status" value="1"/>
</dbReference>
<dbReference type="HAMAP" id="MF_00112">
    <property type="entry name" value="GGGP_HepGP_synthase"/>
    <property type="match status" value="1"/>
</dbReference>
<dbReference type="InterPro" id="IPR038597">
    <property type="entry name" value="GGGP/HepGP_synthase_sf"/>
</dbReference>
<dbReference type="InterPro" id="IPR008205">
    <property type="entry name" value="GGGP_HepGP_synthase"/>
</dbReference>
<dbReference type="InterPro" id="IPR010946">
    <property type="entry name" value="GGGP_synth"/>
</dbReference>
<dbReference type="InterPro" id="IPR050064">
    <property type="entry name" value="IGPS_HisA/HisF"/>
</dbReference>
<dbReference type="NCBIfam" id="TIGR01769">
    <property type="entry name" value="GGGP"/>
    <property type="match status" value="1"/>
</dbReference>
<dbReference type="NCBIfam" id="TIGR01768">
    <property type="entry name" value="GGGP-family"/>
    <property type="match status" value="1"/>
</dbReference>
<dbReference type="NCBIfam" id="NF003198">
    <property type="entry name" value="PRK04169.1-2"/>
    <property type="match status" value="1"/>
</dbReference>
<dbReference type="PANTHER" id="PTHR21235:SF22">
    <property type="entry name" value="GERANYLGERANYLGLYCERYL PHOSPHATE SYNTHASE"/>
    <property type="match status" value="1"/>
</dbReference>
<dbReference type="PANTHER" id="PTHR21235">
    <property type="entry name" value="IMIDAZOLE GLYCEROL PHOSPHATE SYNTHASE SUBUNIT HISF/H IGP SYNTHASE SUBUNIT HISF/H"/>
    <property type="match status" value="1"/>
</dbReference>
<dbReference type="Pfam" id="PF01884">
    <property type="entry name" value="PcrB"/>
    <property type="match status" value="1"/>
</dbReference>
<dbReference type="SUPFAM" id="SSF51395">
    <property type="entry name" value="FMN-linked oxidoreductases"/>
    <property type="match status" value="1"/>
</dbReference>
<sequence>MKIGKVERYIHEKLEKKRLHFVLIDPDDTSPEVAGKLARVCEELEIDAIMVGGSTGAEGETLDEVVKAIKENYSLPVILFPGSHGGISKYADAIFFMSLLNSRNPFFITGAQALGAFRVKKYNLEPIPMAYIIVEPGETAGWVGDAKPIPRHKPKIAAAYALAGQYLGMRLVYLEAGSGAPQPVPETMVATVKKAIDVPLIVGGGIRSGEQVRKLVKAGADIIVTGTAIESAGSIEEARKKLEDLRRGVSI</sequence>
<feature type="chain" id="PRO_0000138740" description="Geranylgeranylglyceryl phosphate synthase">
    <location>
        <begin position="1"/>
        <end position="251"/>
    </location>
</feature>
<feature type="binding site" evidence="1">
    <location>
        <position position="25"/>
    </location>
    <ligand>
        <name>Mg(2+)</name>
        <dbReference type="ChEBI" id="CHEBI:18420"/>
    </ligand>
</feature>
<feature type="binding site" evidence="1">
    <location>
        <position position="54"/>
    </location>
    <ligand>
        <name>Mg(2+)</name>
        <dbReference type="ChEBI" id="CHEBI:18420"/>
    </ligand>
</feature>
<feature type="binding site" evidence="1">
    <location>
        <begin position="173"/>
        <end position="179"/>
    </location>
    <ligand>
        <name>sn-glycerol 1-phosphate</name>
        <dbReference type="ChEBI" id="CHEBI:57685"/>
    </ligand>
</feature>
<feature type="binding site" evidence="1">
    <location>
        <begin position="204"/>
        <end position="205"/>
    </location>
    <ligand>
        <name>sn-glycerol 1-phosphate</name>
        <dbReference type="ChEBI" id="CHEBI:57685"/>
    </ligand>
</feature>
<feature type="binding site" evidence="1">
    <location>
        <begin position="226"/>
        <end position="227"/>
    </location>
    <ligand>
        <name>sn-glycerol 1-phosphate</name>
        <dbReference type="ChEBI" id="CHEBI:57685"/>
    </ligand>
</feature>
<proteinExistence type="inferred from homology"/>
<accession>Q8U213</accession>
<gene>
    <name type="ordered locus">PF1039</name>
</gene>
<keyword id="KW-0963">Cytoplasm</keyword>
<keyword id="KW-0444">Lipid biosynthesis</keyword>
<keyword id="KW-0443">Lipid metabolism</keyword>
<keyword id="KW-0460">Magnesium</keyword>
<keyword id="KW-0479">Metal-binding</keyword>
<keyword id="KW-0594">Phospholipid biosynthesis</keyword>
<keyword id="KW-1208">Phospholipid metabolism</keyword>
<keyword id="KW-1185">Reference proteome</keyword>
<keyword id="KW-0808">Transferase</keyword>
<reference key="1">
    <citation type="journal article" date="1999" name="Genetics">
        <title>Divergence of the hyperthermophilic archaea Pyrococcus furiosus and P. horikoshii inferred from complete genomic sequences.</title>
        <authorList>
            <person name="Maeder D.L."/>
            <person name="Weiss R.B."/>
            <person name="Dunn D.M."/>
            <person name="Cherry J.L."/>
            <person name="Gonzalez J.M."/>
            <person name="DiRuggiero J."/>
            <person name="Robb F.T."/>
        </authorList>
    </citation>
    <scope>NUCLEOTIDE SEQUENCE [LARGE SCALE GENOMIC DNA]</scope>
    <source>
        <strain>ATCC 43587 / DSM 3638 / JCM 8422 / Vc1</strain>
    </source>
</reference>
<comment type="function">
    <text evidence="1">Prenyltransferase that catalyzes the transfer of the geranylgeranyl moiety of geranylgeranyl diphosphate (GGPP) to the C3 hydroxyl of sn-glycerol-1-phosphate (G1P). This reaction is the first ether-bond-formation step in the biosynthesis of archaeal membrane lipids.</text>
</comment>
<comment type="catalytic activity">
    <reaction evidence="1">
        <text>sn-glycerol 1-phosphate + (2E,6E,10E)-geranylgeranyl diphosphate = sn-3-O-(geranylgeranyl)glycerol 1-phosphate + diphosphate</text>
        <dbReference type="Rhea" id="RHEA:23404"/>
        <dbReference type="ChEBI" id="CHEBI:33019"/>
        <dbReference type="ChEBI" id="CHEBI:57677"/>
        <dbReference type="ChEBI" id="CHEBI:57685"/>
        <dbReference type="ChEBI" id="CHEBI:58756"/>
        <dbReference type="EC" id="2.5.1.41"/>
    </reaction>
</comment>
<comment type="cofactor">
    <cofactor evidence="1">
        <name>Mg(2+)</name>
        <dbReference type="ChEBI" id="CHEBI:18420"/>
    </cofactor>
</comment>
<comment type="pathway">
    <text evidence="1">Membrane lipid metabolism; glycerophospholipid metabolism.</text>
</comment>
<comment type="subcellular location">
    <subcellularLocation>
        <location evidence="1">Cytoplasm</location>
    </subcellularLocation>
</comment>
<comment type="similarity">
    <text evidence="1">Belongs to the GGGP/HepGP synthase family. Group II subfamily.</text>
</comment>
<comment type="sequence caution" evidence="2">
    <conflict type="erroneous initiation">
        <sequence resource="EMBL-CDS" id="AAL81163"/>
    </conflict>
</comment>